<comment type="function">
    <text evidence="1 8">cGMP-activated cyclic nucleotide phosphodiesterase with a dual-specificity for the second messengers cAMP and cGMP, which are key regulators of many important physiological processes (PubMed:21724846). Has a higher efficiency with cGMP compared to cAMP (By similarity). Plays a role in cell growth and migration (By similarity).</text>
</comment>
<comment type="function">
    <molecule>Isoform PDE2A2</molecule>
    <text evidence="8 9">Regulates mitochondrial cAMP levels and respiration (PubMed:21724846). Involved in the regulation of mitochondria morphology/dynamics and apoptotic cell death via local modulation of cAMP/PKA signaling in the mitochondrion, including the monitoring of local cAMP levels at the outer mitochondrial membrane and of PKA-dependent phosphorylation of DNM1L (PubMed:28463107).</text>
</comment>
<comment type="catalytic activity">
    <reaction evidence="8">
        <text>a nucleoside 3',5'-cyclic phosphate + H2O = a nucleoside 5'-phosphate + H(+)</text>
        <dbReference type="Rhea" id="RHEA:14653"/>
        <dbReference type="ChEBI" id="CHEBI:15377"/>
        <dbReference type="ChEBI" id="CHEBI:15378"/>
        <dbReference type="ChEBI" id="CHEBI:57867"/>
        <dbReference type="ChEBI" id="CHEBI:58464"/>
        <dbReference type="EC" id="3.1.4.17"/>
    </reaction>
    <physiologicalReaction direction="left-to-right" evidence="12">
        <dbReference type="Rhea" id="RHEA:14654"/>
    </physiologicalReaction>
</comment>
<comment type="catalytic activity">
    <reaction evidence="8">
        <text>3',5'-cyclic GMP + H2O = GMP + H(+)</text>
        <dbReference type="Rhea" id="RHEA:16957"/>
        <dbReference type="ChEBI" id="CHEBI:15377"/>
        <dbReference type="ChEBI" id="CHEBI:15378"/>
        <dbReference type="ChEBI" id="CHEBI:57746"/>
        <dbReference type="ChEBI" id="CHEBI:58115"/>
    </reaction>
    <physiologicalReaction direction="left-to-right" evidence="12">
        <dbReference type="Rhea" id="RHEA:16958"/>
    </physiologicalReaction>
</comment>
<comment type="catalytic activity">
    <reaction evidence="8">
        <text>3',5'-cyclic AMP + H2O = AMP + H(+)</text>
        <dbReference type="Rhea" id="RHEA:25277"/>
        <dbReference type="ChEBI" id="CHEBI:15377"/>
        <dbReference type="ChEBI" id="CHEBI:15378"/>
        <dbReference type="ChEBI" id="CHEBI:58165"/>
        <dbReference type="ChEBI" id="CHEBI:456215"/>
    </reaction>
    <physiologicalReaction direction="left-to-right" evidence="12">
        <dbReference type="Rhea" id="RHEA:25278"/>
    </physiologicalReaction>
</comment>
<comment type="cofactor">
    <cofactor evidence="1">
        <name>Zn(2+)</name>
        <dbReference type="ChEBI" id="CHEBI:29105"/>
    </cofactor>
    <text evidence="1">Binds 2 divalent metal cations per subunit. Site 1 may preferentially bind zinc ions.</text>
</comment>
<comment type="cofactor">
    <cofactor evidence="1">
        <name>Mg(2+)</name>
        <dbReference type="ChEBI" id="CHEBI:18420"/>
    </cofactor>
    <text evidence="1">Binds 2 divalent metal cations per subunit. Site 2 has a preference for magnesium ions.</text>
</comment>
<comment type="activity regulation">
    <text evidence="1 9">The 3',5'-cyclic-AMP phosphodiesterase activity is stimulated by 3',5'-cyclic GMP (By similarity). Specifically inhibited by Bay 60-7550 (PubMed:28463107).</text>
</comment>
<comment type="subunit">
    <text evidence="7">Homodimer.</text>
</comment>
<comment type="subcellular location">
    <molecule>Isoform PDE2A1</molecule>
    <subcellularLocation>
        <location evidence="1">Cytoplasm</location>
    </subcellularLocation>
</comment>
<comment type="subcellular location">
    <molecule>Isoform PDE2A2</molecule>
    <subcellularLocation>
        <location evidence="8">Mitochondrion matrix</location>
    </subcellularLocation>
    <subcellularLocation>
        <location evidence="1">Mitochondrion inner membrane</location>
    </subcellularLocation>
    <subcellularLocation>
        <location evidence="1">Mitochondrion outer membrane</location>
    </subcellularLocation>
</comment>
<comment type="subcellular location">
    <molecule>Isoform PDE2A3</molecule>
    <subcellularLocation>
        <location evidence="1">Cell membrane</location>
        <topology evidence="1">Lipid-anchor</topology>
    </subcellularLocation>
</comment>
<comment type="alternative products">
    <event type="alternative splicing"/>
    <isoform>
        <id>Q922S4-1</id>
        <name evidence="11">PDE2A3</name>
        <sequence type="displayed"/>
    </isoform>
    <isoform>
        <id>Q922S4-2</id>
        <name evidence="11">PDE2A1</name>
        <sequence type="described" ref="VSP_059396 VSP_059397"/>
    </isoform>
    <isoform>
        <id>Q922S4-3</id>
        <name evidence="10">PDE2A2</name>
        <sequence type="described" ref="VSP_059395 VSP_059397"/>
    </isoform>
</comment>
<comment type="tissue specificity">
    <molecule>Isoform PDE2A2</molecule>
    <text evidence="8">Expressed in brain and liver (at protein level).</text>
</comment>
<comment type="domain">
    <text evidence="7">The GAF 1 domain functions as a dimerization domain.</text>
</comment>
<comment type="domain">
    <text evidence="7">The GAF 2 domains binds cGMP, which acts as an allosteric activator.</text>
</comment>
<comment type="disruption phenotype">
    <text evidence="9">Abnormally elongated mitochondria. This phenotype is reversed by treatment with the PKA inhibitor H89. Protected from ionomycin- but not staurosporin-induced cell death.</text>
</comment>
<comment type="miscellaneous">
    <molecule>Isoform PDE2A2</molecule>
    <text evidence="8">Contains a transit peptide at positions 1-17.</text>
</comment>
<comment type="similarity">
    <text evidence="11">Belongs to the cyclic nucleotide phosphodiesterase family. PDE2 subfamily.</text>
</comment>
<comment type="sequence caution" evidence="11">
    <conflict type="frameshift">
        <sequence resource="EMBL" id="BC057029"/>
    </conflict>
</comment>
<proteinExistence type="evidence at protein level"/>
<organism>
    <name type="scientific">Mus musculus</name>
    <name type="common">Mouse</name>
    <dbReference type="NCBI Taxonomy" id="10090"/>
    <lineage>
        <taxon>Eukaryota</taxon>
        <taxon>Metazoa</taxon>
        <taxon>Chordata</taxon>
        <taxon>Craniata</taxon>
        <taxon>Vertebrata</taxon>
        <taxon>Euteleostomi</taxon>
        <taxon>Mammalia</taxon>
        <taxon>Eutheria</taxon>
        <taxon>Euarchontoglires</taxon>
        <taxon>Glires</taxon>
        <taxon>Rodentia</taxon>
        <taxon>Myomorpha</taxon>
        <taxon>Muroidea</taxon>
        <taxon>Muridae</taxon>
        <taxon>Murinae</taxon>
        <taxon>Mus</taxon>
        <taxon>Mus</taxon>
    </lineage>
</organism>
<gene>
    <name evidence="14" type="primary">Pde2a</name>
</gene>
<sequence length="939" mass="105619">MGQACGHSILCRSQQYPAARPAEPRGQQVFLKPDEPPPQPCADSLQDALLSLGAVIDIAGLRQAARDALSAVLPKVETVYTYLLDGESRLVCEDPPHELPQEGKIREAVISQKRLSCNGLGPSDLLGKPLARLVAPLAPDMQVLVIPLLDKETGSVAAVILVHCGQLSDSEEQSLQVVEKHALVALRRVQALQQRRPEAVQNTSVDASEDQKDEKGYTDHDRKILQLCGELFDLDATSLQLKVLQYLQQETQATHCCLLLVSEDNLQLSCKVIGDKVLGEEVSFPLTMGRLGQVVEDKQCIQLKDLTSDDVQQLQNMLGCELQAMLCVPVISRATDQVVALACAFNKLGGDFPTSSFTDEDEHVIQHCFHYTGTVLTSTLAFQKEQKLKCECQALLQVAKNLFTHLDDVSVLLQEIITEARNLSNAEICSVFLLDQNELVAKVFDGGVVDDESYEIRIPADQGIAGHVATTGQILNIPDAYAHPLFYRGVDDSTGFRTRNILCFPIKNENQEVIGVAELVNKINGPWFSKFDEDLATAFSIYCGISIAHSLLYKKVNEAQYRSHLANEMMMYHMKVSDDEYTKLLHDGIQPVAAIDSNFANFTYTPRSLPEDDTSMAILSMLQDMNFINNYKIDCPTLARFCLMVKKGYRDPPYHNWMHAFSVSHFCYLLYKNLELSNYLEDIEIFALFISCMCHDLDHRGTNNSFQVASKSVLAALYSSEGSVMERHHFAQAIAILNTHGCNIFDHFSRKDYQRMLDLMRDIILATDLAHHLRIFKDLQKMAEVGYDRNNRQHHRLLLCLLMTSCDLSDQTKGWKTTRKIAELIYKEFFSQGDLEKAMGNRPMEMMDREKAYIPELQISFMEHIAMPIYKLLQDLFPKAAELYERVASNREHWTKVSHKFTIRGLPSNNSLDFLDEEYEVPDLDGTRAPVNGCCSLEG</sequence>
<reference evidence="13" key="1">
    <citation type="journal article" date="2005" name="Science">
        <title>The transcriptional landscape of the mammalian genome.</title>
        <authorList>
            <person name="Carninci P."/>
            <person name="Kasukawa T."/>
            <person name="Katayama S."/>
            <person name="Gough J."/>
            <person name="Frith M.C."/>
            <person name="Maeda N."/>
            <person name="Oyama R."/>
            <person name="Ravasi T."/>
            <person name="Lenhard B."/>
            <person name="Wells C."/>
            <person name="Kodzius R."/>
            <person name="Shimokawa K."/>
            <person name="Bajic V.B."/>
            <person name="Brenner S.E."/>
            <person name="Batalov S."/>
            <person name="Forrest A.R."/>
            <person name="Zavolan M."/>
            <person name="Davis M.J."/>
            <person name="Wilming L.G."/>
            <person name="Aidinis V."/>
            <person name="Allen J.E."/>
            <person name="Ambesi-Impiombato A."/>
            <person name="Apweiler R."/>
            <person name="Aturaliya R.N."/>
            <person name="Bailey T.L."/>
            <person name="Bansal M."/>
            <person name="Baxter L."/>
            <person name="Beisel K.W."/>
            <person name="Bersano T."/>
            <person name="Bono H."/>
            <person name="Chalk A.M."/>
            <person name="Chiu K.P."/>
            <person name="Choudhary V."/>
            <person name="Christoffels A."/>
            <person name="Clutterbuck D.R."/>
            <person name="Crowe M.L."/>
            <person name="Dalla E."/>
            <person name="Dalrymple B.P."/>
            <person name="de Bono B."/>
            <person name="Della Gatta G."/>
            <person name="di Bernardo D."/>
            <person name="Down T."/>
            <person name="Engstrom P."/>
            <person name="Fagiolini M."/>
            <person name="Faulkner G."/>
            <person name="Fletcher C.F."/>
            <person name="Fukushima T."/>
            <person name="Furuno M."/>
            <person name="Futaki S."/>
            <person name="Gariboldi M."/>
            <person name="Georgii-Hemming P."/>
            <person name="Gingeras T.R."/>
            <person name="Gojobori T."/>
            <person name="Green R.E."/>
            <person name="Gustincich S."/>
            <person name="Harbers M."/>
            <person name="Hayashi Y."/>
            <person name="Hensch T.K."/>
            <person name="Hirokawa N."/>
            <person name="Hill D."/>
            <person name="Huminiecki L."/>
            <person name="Iacono M."/>
            <person name="Ikeo K."/>
            <person name="Iwama A."/>
            <person name="Ishikawa T."/>
            <person name="Jakt M."/>
            <person name="Kanapin A."/>
            <person name="Katoh M."/>
            <person name="Kawasawa Y."/>
            <person name="Kelso J."/>
            <person name="Kitamura H."/>
            <person name="Kitano H."/>
            <person name="Kollias G."/>
            <person name="Krishnan S.P."/>
            <person name="Kruger A."/>
            <person name="Kummerfeld S.K."/>
            <person name="Kurochkin I.V."/>
            <person name="Lareau L.F."/>
            <person name="Lazarevic D."/>
            <person name="Lipovich L."/>
            <person name="Liu J."/>
            <person name="Liuni S."/>
            <person name="McWilliam S."/>
            <person name="Madan Babu M."/>
            <person name="Madera M."/>
            <person name="Marchionni L."/>
            <person name="Matsuda H."/>
            <person name="Matsuzawa S."/>
            <person name="Miki H."/>
            <person name="Mignone F."/>
            <person name="Miyake S."/>
            <person name="Morris K."/>
            <person name="Mottagui-Tabar S."/>
            <person name="Mulder N."/>
            <person name="Nakano N."/>
            <person name="Nakauchi H."/>
            <person name="Ng P."/>
            <person name="Nilsson R."/>
            <person name="Nishiguchi S."/>
            <person name="Nishikawa S."/>
            <person name="Nori F."/>
            <person name="Ohara O."/>
            <person name="Okazaki Y."/>
            <person name="Orlando V."/>
            <person name="Pang K.C."/>
            <person name="Pavan W.J."/>
            <person name="Pavesi G."/>
            <person name="Pesole G."/>
            <person name="Petrovsky N."/>
            <person name="Piazza S."/>
            <person name="Reed J."/>
            <person name="Reid J.F."/>
            <person name="Ring B.Z."/>
            <person name="Ringwald M."/>
            <person name="Rost B."/>
            <person name="Ruan Y."/>
            <person name="Salzberg S.L."/>
            <person name="Sandelin A."/>
            <person name="Schneider C."/>
            <person name="Schoenbach C."/>
            <person name="Sekiguchi K."/>
            <person name="Semple C.A."/>
            <person name="Seno S."/>
            <person name="Sessa L."/>
            <person name="Sheng Y."/>
            <person name="Shibata Y."/>
            <person name="Shimada H."/>
            <person name="Shimada K."/>
            <person name="Silva D."/>
            <person name="Sinclair B."/>
            <person name="Sperling S."/>
            <person name="Stupka E."/>
            <person name="Sugiura K."/>
            <person name="Sultana R."/>
            <person name="Takenaka Y."/>
            <person name="Taki K."/>
            <person name="Tammoja K."/>
            <person name="Tan S.L."/>
            <person name="Tang S."/>
            <person name="Taylor M.S."/>
            <person name="Tegner J."/>
            <person name="Teichmann S.A."/>
            <person name="Ueda H.R."/>
            <person name="van Nimwegen E."/>
            <person name="Verardo R."/>
            <person name="Wei C.L."/>
            <person name="Yagi K."/>
            <person name="Yamanishi H."/>
            <person name="Zabarovsky E."/>
            <person name="Zhu S."/>
            <person name="Zimmer A."/>
            <person name="Hide W."/>
            <person name="Bult C."/>
            <person name="Grimmond S.M."/>
            <person name="Teasdale R.D."/>
            <person name="Liu E.T."/>
            <person name="Brusic V."/>
            <person name="Quackenbush J."/>
            <person name="Wahlestedt C."/>
            <person name="Mattick J.S."/>
            <person name="Hume D.A."/>
            <person name="Kai C."/>
            <person name="Sasaki D."/>
            <person name="Tomaru Y."/>
            <person name="Fukuda S."/>
            <person name="Kanamori-Katayama M."/>
            <person name="Suzuki M."/>
            <person name="Aoki J."/>
            <person name="Arakawa T."/>
            <person name="Iida J."/>
            <person name="Imamura K."/>
            <person name="Itoh M."/>
            <person name="Kato T."/>
            <person name="Kawaji H."/>
            <person name="Kawagashira N."/>
            <person name="Kawashima T."/>
            <person name="Kojima M."/>
            <person name="Kondo S."/>
            <person name="Konno H."/>
            <person name="Nakano K."/>
            <person name="Ninomiya N."/>
            <person name="Nishio T."/>
            <person name="Okada M."/>
            <person name="Plessy C."/>
            <person name="Shibata K."/>
            <person name="Shiraki T."/>
            <person name="Suzuki S."/>
            <person name="Tagami M."/>
            <person name="Waki K."/>
            <person name="Watahiki A."/>
            <person name="Okamura-Oho Y."/>
            <person name="Suzuki H."/>
            <person name="Kawai J."/>
            <person name="Hayashizaki Y."/>
        </authorList>
    </citation>
    <scope>NUCLEOTIDE SEQUENCE [LARGE SCALE MRNA] (ISOFORMS PDE2A2 AND PDE2A3)</scope>
    <source>
        <strain evidence="13">C57BL/6J</strain>
        <tissue evidence="13">Visual cortex</tissue>
    </source>
</reference>
<reference key="2">
    <citation type="journal article" date="2009" name="PLoS Biol.">
        <title>Lineage-specific biology revealed by a finished genome assembly of the mouse.</title>
        <authorList>
            <person name="Church D.M."/>
            <person name="Goodstadt L."/>
            <person name="Hillier L.W."/>
            <person name="Zody M.C."/>
            <person name="Goldstein S."/>
            <person name="She X."/>
            <person name="Bult C.J."/>
            <person name="Agarwala R."/>
            <person name="Cherry J.L."/>
            <person name="DiCuccio M."/>
            <person name="Hlavina W."/>
            <person name="Kapustin Y."/>
            <person name="Meric P."/>
            <person name="Maglott D."/>
            <person name="Birtle Z."/>
            <person name="Marques A.C."/>
            <person name="Graves T."/>
            <person name="Zhou S."/>
            <person name="Teague B."/>
            <person name="Potamousis K."/>
            <person name="Churas C."/>
            <person name="Place M."/>
            <person name="Herschleb J."/>
            <person name="Runnheim R."/>
            <person name="Forrest D."/>
            <person name="Amos-Landgraf J."/>
            <person name="Schwartz D.C."/>
            <person name="Cheng Z."/>
            <person name="Lindblad-Toh K."/>
            <person name="Eichler E.E."/>
            <person name="Ponting C.P."/>
        </authorList>
    </citation>
    <scope>NUCLEOTIDE SEQUENCE [LARGE SCALE GENOMIC DNA]</scope>
    <source>
        <strain>C57BL/6J</strain>
    </source>
</reference>
<reference key="3">
    <citation type="journal article" date="2004" name="Genome Res.">
        <title>The status, quality, and expansion of the NIH full-length cDNA project: the Mammalian Gene Collection (MGC).</title>
        <authorList>
            <consortium name="The MGC Project Team"/>
        </authorList>
    </citation>
    <scope>NUCLEOTIDE SEQUENCE [LARGE SCALE MRNA] (ISOFORM PDE2A1)</scope>
    <source>
        <tissue>Mammary tumor</tissue>
    </source>
</reference>
<reference key="4">
    <citation type="submission" date="2009-01" db="UniProtKB">
        <authorList>
            <person name="Lubec G."/>
            <person name="Sunyer B."/>
            <person name="Chen W.-Q."/>
        </authorList>
    </citation>
    <scope>PROTEIN SEQUENCE OF 828-837</scope>
    <scope>IDENTIFICATION BY MASS SPECTROMETRY</scope>
    <source>
        <strain>OF1</strain>
        <tissue>Hippocampus</tissue>
    </source>
</reference>
<reference key="5">
    <citation type="journal article" date="2011" name="J. Biol. Chem.">
        <title>A phosphodiesterase 2A isoform localized to mitochondria regulates respiration.</title>
        <authorList>
            <person name="Acin-Perez R."/>
            <person name="Russwurm M."/>
            <person name="Gunnewig K."/>
            <person name="Gertz M."/>
            <person name="Zoidl G."/>
            <person name="Ramos L."/>
            <person name="Buck J."/>
            <person name="Levin L.R."/>
            <person name="Rassow J."/>
            <person name="Manfredi G."/>
            <person name="Steegborn C."/>
        </authorList>
    </citation>
    <scope>FUNCTION</scope>
    <scope>FUNCTION (ISOFORM PDE2A2)</scope>
    <scope>CATALYTIC ACTIVITY</scope>
    <scope>SUBCELLULAR LOCATION (ISOFORM PDE2A2)</scope>
    <scope>TISSUE SPECIFICITY (ISOFORM PDE2A2)</scope>
</reference>
<reference key="6">
    <citation type="journal article" date="2017" name="Elife">
        <title>PDE2A2 regulates mitochondria morphology and apoptotic cell death via local modulation of cAMP/PKA signalling.</title>
        <authorList>
            <person name="Monterisi S."/>
            <person name="Lobo M.J."/>
            <person name="Livie C."/>
            <person name="Castle J.C."/>
            <person name="Weinberger M."/>
            <person name="Baillie G."/>
            <person name="Surdo N.C."/>
            <person name="Musheshe N."/>
            <person name="Stangherlin A."/>
            <person name="Gottlieb E."/>
            <person name="Maizels R."/>
            <person name="Bortolozzi M."/>
            <person name="Micaroni M."/>
            <person name="Zaccolo M."/>
        </authorList>
    </citation>
    <scope>FUNCTION (ISOFORM PDE2A2)</scope>
    <scope>DISRUPTION PHENOTYPE</scope>
    <scope>ACTIVITY REGULATION</scope>
    <source>
        <tissue>Embryonic fibroblast</tissue>
    </source>
</reference>
<reference evidence="15" key="7">
    <citation type="journal article" date="2002" name="Proc. Natl. Acad. Sci. U.S.A.">
        <title>The two GAF domains in phosphodiesterase 2A have distinct roles in dimerization and in cGMP binding.</title>
        <authorList>
            <person name="Martinez S.E."/>
            <person name="Wu A.Y."/>
            <person name="Glavas N.A."/>
            <person name="Tang X.-B."/>
            <person name="Turley S."/>
            <person name="Hol W.G.J."/>
            <person name="Beavo J.A."/>
        </authorList>
    </citation>
    <scope>X-RAY CRYSTALLOGRAPHY (2.86 ANGSTROMS) OF 217-561 IN COMPLEX WITH CGMP</scope>
    <scope>DOMAIN</scope>
    <scope>SUBUNIT</scope>
</reference>
<dbReference type="EC" id="3.1.4.17" evidence="8"/>
<dbReference type="EMBL" id="AK159012">
    <property type="protein sequence ID" value="BAE34768.1"/>
    <property type="molecule type" value="mRNA"/>
</dbReference>
<dbReference type="EMBL" id="AK170573">
    <property type="protein sequence ID" value="BAE41887.1"/>
    <property type="molecule type" value="mRNA"/>
</dbReference>
<dbReference type="EMBL" id="AC129079">
    <property type="status" value="NOT_ANNOTATED_CDS"/>
    <property type="molecule type" value="Genomic_DNA"/>
</dbReference>
<dbReference type="EMBL" id="AC129609">
    <property type="status" value="NOT_ANNOTATED_CDS"/>
    <property type="molecule type" value="Genomic_DNA"/>
</dbReference>
<dbReference type="EMBL" id="BC006845">
    <property type="protein sequence ID" value="AAH06845.1"/>
    <property type="molecule type" value="mRNA"/>
</dbReference>
<dbReference type="EMBL" id="BC029810">
    <property type="protein sequence ID" value="AAH29810.1"/>
    <property type="molecule type" value="mRNA"/>
</dbReference>
<dbReference type="EMBL" id="BC057029">
    <property type="status" value="NOT_ANNOTATED_CDS"/>
    <property type="molecule type" value="mRNA"/>
</dbReference>
<dbReference type="CCDS" id="CCDS52330.1">
    <molecule id="Q922S4-1"/>
</dbReference>
<dbReference type="RefSeq" id="NP_001137320.1">
    <molecule id="Q922S4-1"/>
    <property type="nucleotide sequence ID" value="NM_001143848.3"/>
</dbReference>
<dbReference type="RefSeq" id="NP_001137321.1">
    <molecule id="Q922S4-3"/>
    <property type="nucleotide sequence ID" value="NM_001143849.3"/>
</dbReference>
<dbReference type="RefSeq" id="NP_001230686.1">
    <molecule id="Q922S4-2"/>
    <property type="nucleotide sequence ID" value="NM_001243757.2"/>
</dbReference>
<dbReference type="RefSeq" id="NP_001407472.1">
    <molecule id="Q922S4-2"/>
    <property type="nucleotide sequence ID" value="NM_001420543.1"/>
</dbReference>
<dbReference type="RefSeq" id="XP_006507590.1">
    <property type="nucleotide sequence ID" value="XM_006507527.3"/>
</dbReference>
<dbReference type="RefSeq" id="XP_030098167.1">
    <molecule id="Q922S4-2"/>
    <property type="nucleotide sequence ID" value="XM_030242307.2"/>
</dbReference>
<dbReference type="PDB" id="1MC0">
    <property type="method" value="X-ray"/>
    <property type="resolution" value="2.86 A"/>
    <property type="chains" value="A=217-561"/>
</dbReference>
<dbReference type="PDBsum" id="1MC0"/>
<dbReference type="SMR" id="Q922S4"/>
<dbReference type="CORUM" id="Q922S4"/>
<dbReference type="FunCoup" id="Q922S4">
    <property type="interactions" value="1473"/>
</dbReference>
<dbReference type="IntAct" id="Q922S4">
    <property type="interactions" value="4"/>
</dbReference>
<dbReference type="MINT" id="Q922S4"/>
<dbReference type="STRING" id="10090.ENSMUSP00000147553"/>
<dbReference type="GlyGen" id="Q922S4">
    <property type="glycosylation" value="3 sites, 2 N-linked glycans (2 sites), 1 O-linked glycan (1 site)"/>
</dbReference>
<dbReference type="iPTMnet" id="Q922S4"/>
<dbReference type="PhosphoSitePlus" id="Q922S4"/>
<dbReference type="SwissPalm" id="Q922S4"/>
<dbReference type="jPOST" id="Q922S4"/>
<dbReference type="PaxDb" id="10090-ENSMUSP00000131553"/>
<dbReference type="PeptideAtlas" id="Q922S4"/>
<dbReference type="ProteomicsDB" id="294040">
    <molecule id="Q922S4-1"/>
</dbReference>
<dbReference type="ProteomicsDB" id="340613"/>
<dbReference type="DNASU" id="207728"/>
<dbReference type="Ensembl" id="ENSMUST00000163751.10">
    <molecule id="Q922S4-1"/>
    <property type="protein sequence ID" value="ENSMUSP00000131553.3"/>
    <property type="gene ID" value="ENSMUSG00000110195.3"/>
</dbReference>
<dbReference type="GeneID" id="207728"/>
<dbReference type="KEGG" id="mmu:207728"/>
<dbReference type="UCSC" id="uc009ioq.3">
    <molecule id="Q922S4-1"/>
    <property type="organism name" value="mouse"/>
</dbReference>
<dbReference type="UCSC" id="uc012fqk.2">
    <property type="organism name" value="mouse"/>
</dbReference>
<dbReference type="AGR" id="MGI:2446107"/>
<dbReference type="CTD" id="5138"/>
<dbReference type="MGI" id="MGI:2446107">
    <property type="gene designation" value="Pde2a"/>
</dbReference>
<dbReference type="VEuPathDB" id="HostDB:ENSMUSG00000110195"/>
<dbReference type="eggNOG" id="KOG3689">
    <property type="taxonomic scope" value="Eukaryota"/>
</dbReference>
<dbReference type="GeneTree" id="ENSGT00940000159817"/>
<dbReference type="InParanoid" id="Q922S4"/>
<dbReference type="OrthoDB" id="295473at2759"/>
<dbReference type="TreeFam" id="TF316499"/>
<dbReference type="BRENDA" id="3.1.4.17">
    <property type="organism ID" value="3474"/>
</dbReference>
<dbReference type="Reactome" id="R-MMU-418457">
    <property type="pathway name" value="cGMP effects"/>
</dbReference>
<dbReference type="Reactome" id="R-MMU-418555">
    <property type="pathway name" value="G alpha (s) signalling events"/>
</dbReference>
<dbReference type="BioGRID-ORCS" id="207728">
    <property type="hits" value="2 hits in 76 CRISPR screens"/>
</dbReference>
<dbReference type="ChiTaRS" id="Pde2a">
    <property type="organism name" value="mouse"/>
</dbReference>
<dbReference type="EvolutionaryTrace" id="Q922S4"/>
<dbReference type="PRO" id="PR:Q922S4"/>
<dbReference type="Proteomes" id="UP000000589">
    <property type="component" value="Chromosome 7"/>
</dbReference>
<dbReference type="RNAct" id="Q922S4">
    <property type="molecule type" value="protein"/>
</dbReference>
<dbReference type="Bgee" id="ENSMUSG00000110195">
    <property type="expression patterns" value="Expressed in striatum and 94 other cell types or tissues"/>
</dbReference>
<dbReference type="ExpressionAtlas" id="Q922S4">
    <property type="expression patterns" value="baseline and differential"/>
</dbReference>
<dbReference type="GO" id="GO:0030424">
    <property type="term" value="C:axon"/>
    <property type="evidence" value="ECO:0000314"/>
    <property type="project" value="MGI"/>
</dbReference>
<dbReference type="GO" id="GO:0005737">
    <property type="term" value="C:cytoplasm"/>
    <property type="evidence" value="ECO:0000314"/>
    <property type="project" value="UniProtKB"/>
</dbReference>
<dbReference type="GO" id="GO:0005829">
    <property type="term" value="C:cytosol"/>
    <property type="evidence" value="ECO:0000314"/>
    <property type="project" value="UniProtKB"/>
</dbReference>
<dbReference type="GO" id="GO:0030425">
    <property type="term" value="C:dendrite"/>
    <property type="evidence" value="ECO:0000314"/>
    <property type="project" value="MGI"/>
</dbReference>
<dbReference type="GO" id="GO:0005783">
    <property type="term" value="C:endoplasmic reticulum"/>
    <property type="evidence" value="ECO:0000314"/>
    <property type="project" value="UniProtKB"/>
</dbReference>
<dbReference type="GO" id="GO:0005794">
    <property type="term" value="C:Golgi apparatus"/>
    <property type="evidence" value="ECO:0000314"/>
    <property type="project" value="UniProtKB"/>
</dbReference>
<dbReference type="GO" id="GO:0005743">
    <property type="term" value="C:mitochondrial inner membrane"/>
    <property type="evidence" value="ECO:0000314"/>
    <property type="project" value="UniProtKB"/>
</dbReference>
<dbReference type="GO" id="GO:0005759">
    <property type="term" value="C:mitochondrial matrix"/>
    <property type="evidence" value="ECO:0000314"/>
    <property type="project" value="UniProtKB"/>
</dbReference>
<dbReference type="GO" id="GO:0005741">
    <property type="term" value="C:mitochondrial outer membrane"/>
    <property type="evidence" value="ECO:0000314"/>
    <property type="project" value="UniProtKB"/>
</dbReference>
<dbReference type="GO" id="GO:0005739">
    <property type="term" value="C:mitochondrion"/>
    <property type="evidence" value="ECO:0000314"/>
    <property type="project" value="UniProtKB"/>
</dbReference>
<dbReference type="GO" id="GO:0005634">
    <property type="term" value="C:nucleus"/>
    <property type="evidence" value="ECO:0000314"/>
    <property type="project" value="UniProtKB"/>
</dbReference>
<dbReference type="GO" id="GO:0048471">
    <property type="term" value="C:perinuclear region of cytoplasm"/>
    <property type="evidence" value="ECO:0000314"/>
    <property type="project" value="UniProtKB"/>
</dbReference>
<dbReference type="GO" id="GO:0005886">
    <property type="term" value="C:plasma membrane"/>
    <property type="evidence" value="ECO:0000314"/>
    <property type="project" value="UniProtKB"/>
</dbReference>
<dbReference type="GO" id="GO:0042734">
    <property type="term" value="C:presynaptic membrane"/>
    <property type="evidence" value="ECO:0000314"/>
    <property type="project" value="UniProtKB"/>
</dbReference>
<dbReference type="GO" id="GO:0004118">
    <property type="term" value="F:3',5'-cGMP-stimulated cyclic-nucleotide phosphodiesterase activity"/>
    <property type="evidence" value="ECO:0000314"/>
    <property type="project" value="UniProtKB"/>
</dbReference>
<dbReference type="GO" id="GO:0004115">
    <property type="term" value="F:3',5'-cyclic-AMP phosphodiesterase activity"/>
    <property type="evidence" value="ECO:0000315"/>
    <property type="project" value="UniProtKB"/>
</dbReference>
<dbReference type="GO" id="GO:0047555">
    <property type="term" value="F:3',5'-cyclic-GMP phosphodiesterase activity"/>
    <property type="evidence" value="ECO:0000315"/>
    <property type="project" value="UniProtKB"/>
</dbReference>
<dbReference type="GO" id="GO:0030552">
    <property type="term" value="F:cAMP binding"/>
    <property type="evidence" value="ECO:0000315"/>
    <property type="project" value="UniProtKB"/>
</dbReference>
<dbReference type="GO" id="GO:0030553">
    <property type="term" value="F:cGMP binding"/>
    <property type="evidence" value="ECO:0000314"/>
    <property type="project" value="UniProtKB"/>
</dbReference>
<dbReference type="GO" id="GO:0036004">
    <property type="term" value="F:GAF domain binding"/>
    <property type="evidence" value="ECO:0000314"/>
    <property type="project" value="UniProtKB"/>
</dbReference>
<dbReference type="GO" id="GO:0046872">
    <property type="term" value="F:metal ion binding"/>
    <property type="evidence" value="ECO:0007669"/>
    <property type="project" value="UniProtKB-KW"/>
</dbReference>
<dbReference type="GO" id="GO:0042803">
    <property type="term" value="F:protein homodimerization activity"/>
    <property type="evidence" value="ECO:0000314"/>
    <property type="project" value="UniProtKB"/>
</dbReference>
<dbReference type="GO" id="GO:0035904">
    <property type="term" value="P:aorta development"/>
    <property type="evidence" value="ECO:0000315"/>
    <property type="project" value="MGI"/>
</dbReference>
<dbReference type="GO" id="GO:0019933">
    <property type="term" value="P:cAMP-mediated signaling"/>
    <property type="evidence" value="ECO:0000303"/>
    <property type="project" value="UniProtKB"/>
</dbReference>
<dbReference type="GO" id="GO:0003279">
    <property type="term" value="P:cardiac septum development"/>
    <property type="evidence" value="ECO:0000315"/>
    <property type="project" value="MGI"/>
</dbReference>
<dbReference type="GO" id="GO:0071321">
    <property type="term" value="P:cellular response to cGMP"/>
    <property type="evidence" value="ECO:0000250"/>
    <property type="project" value="UniProtKB"/>
</dbReference>
<dbReference type="GO" id="GO:0097011">
    <property type="term" value="P:cellular response to granulocyte macrophage colony-stimulating factor stimulus"/>
    <property type="evidence" value="ECO:0000250"/>
    <property type="project" value="UniProtKB"/>
</dbReference>
<dbReference type="GO" id="GO:0071222">
    <property type="term" value="P:cellular response to lipopolysaccharide"/>
    <property type="evidence" value="ECO:0000270"/>
    <property type="project" value="UniProtKB"/>
</dbReference>
<dbReference type="GO" id="GO:0036006">
    <property type="term" value="P:cellular response to macrophage colony-stimulating factor stimulus"/>
    <property type="evidence" value="ECO:0000250"/>
    <property type="project" value="UniProtKB"/>
</dbReference>
<dbReference type="GO" id="GO:0071260">
    <property type="term" value="P:cellular response to mechanical stimulus"/>
    <property type="evidence" value="ECO:0000314"/>
    <property type="project" value="UniProtKB"/>
</dbReference>
<dbReference type="GO" id="GO:0046069">
    <property type="term" value="P:cGMP catabolic process"/>
    <property type="evidence" value="ECO:0000315"/>
    <property type="project" value="UniProtKB"/>
</dbReference>
<dbReference type="GO" id="GO:0019934">
    <property type="term" value="P:cGMP-mediated signaling"/>
    <property type="evidence" value="ECO:0000314"/>
    <property type="project" value="UniProtKB"/>
</dbReference>
<dbReference type="GO" id="GO:0060976">
    <property type="term" value="P:coronary vasculature development"/>
    <property type="evidence" value="ECO:0000315"/>
    <property type="project" value="MGI"/>
</dbReference>
<dbReference type="GO" id="GO:0061028">
    <property type="term" value="P:establishment of endothelial barrier"/>
    <property type="evidence" value="ECO:0000250"/>
    <property type="project" value="UniProtKB"/>
</dbReference>
<dbReference type="GO" id="GO:0007507">
    <property type="term" value="P:heart development"/>
    <property type="evidence" value="ECO:0000315"/>
    <property type="project" value="MGI"/>
</dbReference>
<dbReference type="GO" id="GO:0003170">
    <property type="term" value="P:heart valve development"/>
    <property type="evidence" value="ECO:0000315"/>
    <property type="project" value="MGI"/>
</dbReference>
<dbReference type="GO" id="GO:0035556">
    <property type="term" value="P:intracellular signal transduction"/>
    <property type="evidence" value="ECO:0000315"/>
    <property type="project" value="UniProtKB"/>
</dbReference>
<dbReference type="GO" id="GO:0106072">
    <property type="term" value="P:negative regulation of adenylate cyclase-activating G protein-coupled receptor signaling pathway"/>
    <property type="evidence" value="ECO:0000250"/>
    <property type="project" value="UniProtKB"/>
</dbReference>
<dbReference type="GO" id="GO:0010754">
    <property type="term" value="P:negative regulation of cGMP-mediated signaling"/>
    <property type="evidence" value="ECO:0000315"/>
    <property type="project" value="UniProtKB"/>
</dbReference>
<dbReference type="GO" id="GO:0090324">
    <property type="term" value="P:negative regulation of oxidative phosphorylation"/>
    <property type="evidence" value="ECO:0000315"/>
    <property type="project" value="UniProtKB"/>
</dbReference>
<dbReference type="GO" id="GO:0000122">
    <property type="term" value="P:negative regulation of transcription by RNA polymerase II"/>
    <property type="evidence" value="ECO:0000250"/>
    <property type="project" value="UniProtKB"/>
</dbReference>
<dbReference type="GO" id="GO:0043116">
    <property type="term" value="P:negative regulation of vascular permeability"/>
    <property type="evidence" value="ECO:0000250"/>
    <property type="project" value="UniProtKB"/>
</dbReference>
<dbReference type="GO" id="GO:0010628">
    <property type="term" value="P:positive regulation of gene expression"/>
    <property type="evidence" value="ECO:0000315"/>
    <property type="project" value="UniProtKB"/>
</dbReference>
<dbReference type="GO" id="GO:0050729">
    <property type="term" value="P:positive regulation of inflammatory response"/>
    <property type="evidence" value="ECO:0000315"/>
    <property type="project" value="UniProtKB"/>
</dbReference>
<dbReference type="GO" id="GO:0043117">
    <property type="term" value="P:positive regulation of vascular permeability"/>
    <property type="evidence" value="ECO:0000250"/>
    <property type="project" value="UniProtKB"/>
</dbReference>
<dbReference type="GO" id="GO:0010821">
    <property type="term" value="P:regulation of mitochondrion organization"/>
    <property type="evidence" value="ECO:0000315"/>
    <property type="project" value="UniProtKB"/>
</dbReference>
<dbReference type="GO" id="GO:0010749">
    <property type="term" value="P:regulation of nitric oxide mediated signal transduction"/>
    <property type="evidence" value="ECO:0000316"/>
    <property type="project" value="MGI"/>
</dbReference>
<dbReference type="GO" id="GO:0003281">
    <property type="term" value="P:ventricular septum development"/>
    <property type="evidence" value="ECO:0000315"/>
    <property type="project" value="MGI"/>
</dbReference>
<dbReference type="CDD" id="cd00077">
    <property type="entry name" value="HDc"/>
    <property type="match status" value="1"/>
</dbReference>
<dbReference type="FunFam" id="1.10.1300.10:FF:000009">
    <property type="entry name" value="Phosphodiesterase"/>
    <property type="match status" value="1"/>
</dbReference>
<dbReference type="FunFam" id="3.30.450.40:FF:000007">
    <property type="entry name" value="Phosphodiesterase"/>
    <property type="match status" value="1"/>
</dbReference>
<dbReference type="FunFam" id="3.30.450.40:FF:000014">
    <property type="entry name" value="Phosphodiesterase"/>
    <property type="match status" value="1"/>
</dbReference>
<dbReference type="Gene3D" id="3.30.450.40">
    <property type="match status" value="2"/>
</dbReference>
<dbReference type="Gene3D" id="1.10.1300.10">
    <property type="entry name" value="3'5'-cyclic nucleotide phosphodiesterase, catalytic domain"/>
    <property type="match status" value="1"/>
</dbReference>
<dbReference type="InterPro" id="IPR003018">
    <property type="entry name" value="GAF"/>
</dbReference>
<dbReference type="InterPro" id="IPR029016">
    <property type="entry name" value="GAF-like_dom_sf"/>
</dbReference>
<dbReference type="InterPro" id="IPR003607">
    <property type="entry name" value="HD/PDEase_dom"/>
</dbReference>
<dbReference type="InterPro" id="IPR023088">
    <property type="entry name" value="PDEase"/>
</dbReference>
<dbReference type="InterPro" id="IPR002073">
    <property type="entry name" value="PDEase_catalytic_dom"/>
</dbReference>
<dbReference type="InterPro" id="IPR036971">
    <property type="entry name" value="PDEase_catalytic_dom_sf"/>
</dbReference>
<dbReference type="InterPro" id="IPR023174">
    <property type="entry name" value="PDEase_CS"/>
</dbReference>
<dbReference type="PANTHER" id="PTHR11347">
    <property type="entry name" value="CYCLIC NUCLEOTIDE PHOSPHODIESTERASE"/>
    <property type="match status" value="1"/>
</dbReference>
<dbReference type="Pfam" id="PF01590">
    <property type="entry name" value="GAF"/>
    <property type="match status" value="1"/>
</dbReference>
<dbReference type="Pfam" id="PF13185">
    <property type="entry name" value="GAF_2"/>
    <property type="match status" value="1"/>
</dbReference>
<dbReference type="Pfam" id="PF00233">
    <property type="entry name" value="PDEase_I"/>
    <property type="match status" value="1"/>
</dbReference>
<dbReference type="PRINTS" id="PR00387">
    <property type="entry name" value="PDIESTERASE1"/>
</dbReference>
<dbReference type="SMART" id="SM00065">
    <property type="entry name" value="GAF"/>
    <property type="match status" value="2"/>
</dbReference>
<dbReference type="SMART" id="SM00471">
    <property type="entry name" value="HDc"/>
    <property type="match status" value="1"/>
</dbReference>
<dbReference type="SUPFAM" id="SSF55781">
    <property type="entry name" value="GAF domain-like"/>
    <property type="match status" value="3"/>
</dbReference>
<dbReference type="SUPFAM" id="SSF109604">
    <property type="entry name" value="HD-domain/PDEase-like"/>
    <property type="match status" value="1"/>
</dbReference>
<dbReference type="PROSITE" id="PS00126">
    <property type="entry name" value="PDEASE_I_1"/>
    <property type="match status" value="1"/>
</dbReference>
<dbReference type="PROSITE" id="PS51845">
    <property type="entry name" value="PDEASE_I_2"/>
    <property type="match status" value="1"/>
</dbReference>
<feature type="initiator methionine" description="Removed" evidence="1">
    <location>
        <position position="1"/>
    </location>
</feature>
<feature type="chain" id="PRO_0000198797" description="cGMP-dependent 3',5'-cyclic phosphodiesterase">
    <location>
        <begin position="2"/>
        <end position="939"/>
    </location>
</feature>
<feature type="domain" description="GAF 1" evidence="4">
    <location>
        <begin position="236"/>
        <end position="373"/>
    </location>
</feature>
<feature type="domain" description="GAF 2" evidence="4">
    <location>
        <begin position="408"/>
        <end position="547"/>
    </location>
</feature>
<feature type="domain" description="PDEase" evidence="5">
    <location>
        <begin position="577"/>
        <end position="901"/>
    </location>
</feature>
<feature type="region of interest" description="Disordered" evidence="6">
    <location>
        <begin position="16"/>
        <end position="38"/>
    </location>
</feature>
<feature type="region of interest" description="Disordered" evidence="6">
    <location>
        <begin position="197"/>
        <end position="217"/>
    </location>
</feature>
<feature type="active site" description="Proton donor" evidence="2">
    <location>
        <position position="655"/>
    </location>
</feature>
<feature type="binding site" evidence="7 15">
    <location>
        <position position="430"/>
    </location>
    <ligand>
        <name>3',5'-cyclic GMP</name>
        <dbReference type="ChEBI" id="CHEBI:57746"/>
        <note>allosteric activator</note>
    </ligand>
</feature>
<feature type="binding site" evidence="7 15">
    <location>
        <position position="445"/>
    </location>
    <ligand>
        <name>3',5'-cyclic GMP</name>
        <dbReference type="ChEBI" id="CHEBI:57746"/>
        <note>allosteric activator</note>
    </ligand>
</feature>
<feature type="binding site" evidence="7 15">
    <location>
        <position position="464"/>
    </location>
    <ligand>
        <name>3',5'-cyclic GMP</name>
        <dbReference type="ChEBI" id="CHEBI:57746"/>
        <note>allosteric activator</note>
    </ligand>
</feature>
<feature type="binding site" evidence="7 15">
    <location>
        <position position="487"/>
    </location>
    <ligand>
        <name>3',5'-cyclic GMP</name>
        <dbReference type="ChEBI" id="CHEBI:57746"/>
        <note>allosteric activator</note>
    </ligand>
</feature>
<feature type="binding site" evidence="7 15">
    <location>
        <position position="498"/>
    </location>
    <ligand>
        <name>3',5'-cyclic GMP</name>
        <dbReference type="ChEBI" id="CHEBI:57746"/>
        <note>allosteric activator</note>
    </ligand>
</feature>
<feature type="binding site" evidence="1">
    <location>
        <position position="659"/>
    </location>
    <ligand>
        <name>Zn(2+)</name>
        <dbReference type="ChEBI" id="CHEBI:29105"/>
    </ligand>
</feature>
<feature type="binding site" evidence="1">
    <location>
        <position position="695"/>
    </location>
    <ligand>
        <name>Zn(2+)</name>
        <dbReference type="ChEBI" id="CHEBI:29105"/>
    </ligand>
</feature>
<feature type="binding site" evidence="1">
    <location>
        <position position="696"/>
    </location>
    <ligand>
        <name>Mg(2+)</name>
        <dbReference type="ChEBI" id="CHEBI:18420"/>
    </ligand>
</feature>
<feature type="binding site" evidence="1">
    <location>
        <position position="696"/>
    </location>
    <ligand>
        <name>Zn(2+)</name>
        <dbReference type="ChEBI" id="CHEBI:29105"/>
    </ligand>
</feature>
<feature type="binding site" evidence="1">
    <location>
        <position position="807"/>
    </location>
    <ligand>
        <name>Zn(2+)</name>
        <dbReference type="ChEBI" id="CHEBI:29105"/>
    </ligand>
</feature>
<feature type="modified residue" description="Phosphoserine" evidence="3">
    <location>
        <position position="116"/>
    </location>
</feature>
<feature type="lipid moiety-binding region" description="N-myristoyl glycine" evidence="1">
    <location>
        <position position="2"/>
    </location>
</feature>
<feature type="lipid moiety-binding region" description="S-palmitoyl cysteine" evidence="1">
    <location>
        <position position="5"/>
    </location>
</feature>
<feature type="lipid moiety-binding region" description="S-palmitoyl cysteine" evidence="1">
    <location>
        <position position="11"/>
    </location>
</feature>
<feature type="splice variant" id="VSP_059396" description="In isoform PDE2A1." evidence="11">
    <original>MGQACGHSILCRSQQYPAARPAEPRGQQVFLKPDEPPPQPCADSLQ</original>
    <variation>MRRQPAASQDPLAQKPEPPGSRDDRLE</variation>
    <location>
        <begin position="1"/>
        <end position="46"/>
    </location>
</feature>
<feature type="splice variant" id="VSP_059395" description="In isoform PDE2A2." evidence="11">
    <original>MGQACGHSILCRSQQYPAARPAEP</original>
    <variation>MVLVLHHILIAVVQFLR</variation>
    <location>
        <begin position="1"/>
        <end position="24"/>
    </location>
</feature>
<feature type="splice variant" id="VSP_059397" description="In isoform PDE2A1 and isoform PDE2A2." evidence="11">
    <location>
        <begin position="353"/>
        <end position="356"/>
    </location>
</feature>
<feature type="sequence conflict" description="In Ref. 1; BAE41887." evidence="11" ref="1">
    <original>D</original>
    <variation>G</variation>
    <location>
        <position position="596"/>
    </location>
</feature>
<feature type="helix" evidence="16">
    <location>
        <begin position="218"/>
        <end position="229"/>
    </location>
</feature>
<feature type="helix" evidence="16">
    <location>
        <begin position="236"/>
        <end position="250"/>
    </location>
</feature>
<feature type="strand" evidence="16">
    <location>
        <begin position="253"/>
        <end position="261"/>
    </location>
</feature>
<feature type="strand" evidence="16">
    <location>
        <begin position="263"/>
        <end position="265"/>
    </location>
</feature>
<feature type="strand" evidence="16">
    <location>
        <begin position="267"/>
        <end position="273"/>
    </location>
</feature>
<feature type="strand" evidence="16">
    <location>
        <begin position="276"/>
        <end position="290"/>
    </location>
</feature>
<feature type="helix" evidence="16">
    <location>
        <begin position="291"/>
        <end position="297"/>
    </location>
</feature>
<feature type="helix" evidence="16">
    <location>
        <begin position="303"/>
        <end position="305"/>
    </location>
</feature>
<feature type="helix" evidence="16">
    <location>
        <begin position="308"/>
        <end position="318"/>
    </location>
</feature>
<feature type="strand" evidence="16">
    <location>
        <begin position="325"/>
        <end position="331"/>
    </location>
</feature>
<feature type="turn" evidence="16">
    <location>
        <begin position="333"/>
        <end position="335"/>
    </location>
</feature>
<feature type="strand" evidence="16">
    <location>
        <begin position="337"/>
        <end position="349"/>
    </location>
</feature>
<feature type="helix" evidence="16">
    <location>
        <begin position="360"/>
        <end position="404"/>
    </location>
</feature>
<feature type="turn" evidence="16">
    <location>
        <begin position="405"/>
        <end position="407"/>
    </location>
</feature>
<feature type="turn" evidence="16">
    <location>
        <begin position="409"/>
        <end position="411"/>
    </location>
</feature>
<feature type="helix" evidence="16">
    <location>
        <begin position="412"/>
        <end position="424"/>
    </location>
</feature>
<feature type="strand" evidence="16">
    <location>
        <begin position="426"/>
        <end position="434"/>
    </location>
</feature>
<feature type="strand" evidence="16">
    <location>
        <begin position="436"/>
        <end position="444"/>
    </location>
</feature>
<feature type="helix" evidence="16">
    <location>
        <begin position="463"/>
        <end position="471"/>
    </location>
</feature>
<feature type="strand" evidence="16">
    <location>
        <begin position="475"/>
        <end position="478"/>
    </location>
</feature>
<feature type="helix" evidence="16">
    <location>
        <begin position="491"/>
        <end position="494"/>
    </location>
</feature>
<feature type="strand" evidence="16">
    <location>
        <begin position="501"/>
        <end position="507"/>
    </location>
</feature>
<feature type="strand" evidence="16">
    <location>
        <begin position="513"/>
        <end position="522"/>
    </location>
</feature>
<feature type="strand" evidence="16">
    <location>
        <begin position="525"/>
        <end position="527"/>
    </location>
</feature>
<feature type="helix" evidence="16">
    <location>
        <begin position="530"/>
        <end position="558"/>
    </location>
</feature>
<evidence type="ECO:0000250" key="1">
    <source>
        <dbReference type="UniProtKB" id="O00408"/>
    </source>
</evidence>
<evidence type="ECO:0000250" key="2">
    <source>
        <dbReference type="UniProtKB" id="O76083"/>
    </source>
</evidence>
<evidence type="ECO:0000250" key="3">
    <source>
        <dbReference type="UniProtKB" id="Q01062"/>
    </source>
</evidence>
<evidence type="ECO:0000255" key="4"/>
<evidence type="ECO:0000255" key="5">
    <source>
        <dbReference type="PROSITE-ProRule" id="PRU01192"/>
    </source>
</evidence>
<evidence type="ECO:0000256" key="6">
    <source>
        <dbReference type="SAM" id="MobiDB-lite"/>
    </source>
</evidence>
<evidence type="ECO:0000269" key="7">
    <source>
    </source>
</evidence>
<evidence type="ECO:0000269" key="8">
    <source>
    </source>
</evidence>
<evidence type="ECO:0000269" key="9">
    <source>
    </source>
</evidence>
<evidence type="ECO:0000303" key="10">
    <source>
    </source>
</evidence>
<evidence type="ECO:0000305" key="11"/>
<evidence type="ECO:0000305" key="12">
    <source>
    </source>
</evidence>
<evidence type="ECO:0000312" key="13">
    <source>
        <dbReference type="EMBL" id="BAE34768.1"/>
    </source>
</evidence>
<evidence type="ECO:0000312" key="14">
    <source>
        <dbReference type="MGI" id="MGI:2446107"/>
    </source>
</evidence>
<evidence type="ECO:0007744" key="15">
    <source>
        <dbReference type="PDB" id="1MC0"/>
    </source>
</evidence>
<evidence type="ECO:0007829" key="16">
    <source>
        <dbReference type="PDB" id="1MC0"/>
    </source>
</evidence>
<protein>
    <recommendedName>
        <fullName evidence="12">cGMP-dependent 3',5'-cyclic phosphodiesterase</fullName>
        <ecNumber evidence="8">3.1.4.17</ecNumber>
    </recommendedName>
    <alternativeName>
        <fullName>Cyclic GMP-stimulated phosphodiesterase</fullName>
        <shortName>CGS-PDE</shortName>
        <shortName>cGSPDE</shortName>
    </alternativeName>
</protein>
<name>PDE2A_MOUSE</name>
<keyword id="KW-0002">3D-structure</keyword>
<keyword id="KW-0025">Alternative splicing</keyword>
<keyword id="KW-0114">cAMP</keyword>
<keyword id="KW-1003">Cell membrane</keyword>
<keyword id="KW-0140">cGMP</keyword>
<keyword id="KW-0142">cGMP-binding</keyword>
<keyword id="KW-0963">Cytoplasm</keyword>
<keyword id="KW-0903">Direct protein sequencing</keyword>
<keyword id="KW-0378">Hydrolase</keyword>
<keyword id="KW-0449">Lipoprotein</keyword>
<keyword id="KW-0460">Magnesium</keyword>
<keyword id="KW-0472">Membrane</keyword>
<keyword id="KW-0479">Metal-binding</keyword>
<keyword id="KW-0496">Mitochondrion</keyword>
<keyword id="KW-0999">Mitochondrion inner membrane</keyword>
<keyword id="KW-1000">Mitochondrion outer membrane</keyword>
<keyword id="KW-0519">Myristate</keyword>
<keyword id="KW-0547">Nucleotide-binding</keyword>
<keyword id="KW-0564">Palmitate</keyword>
<keyword id="KW-0597">Phosphoprotein</keyword>
<keyword id="KW-1185">Reference proteome</keyword>
<keyword id="KW-0677">Repeat</keyword>
<keyword id="KW-0862">Zinc</keyword>
<accession>Q922S4</accession>
<accession>Q3TCR8</accession>
<accession>Q3TXZ6</accession>
<accession>Q8K2U1</accession>